<organism>
    <name type="scientific">Homo sapiens</name>
    <name type="common">Human</name>
    <dbReference type="NCBI Taxonomy" id="9606"/>
    <lineage>
        <taxon>Eukaryota</taxon>
        <taxon>Metazoa</taxon>
        <taxon>Chordata</taxon>
        <taxon>Craniata</taxon>
        <taxon>Vertebrata</taxon>
        <taxon>Euteleostomi</taxon>
        <taxon>Mammalia</taxon>
        <taxon>Eutheria</taxon>
        <taxon>Euarchontoglires</taxon>
        <taxon>Primates</taxon>
        <taxon>Haplorrhini</taxon>
        <taxon>Catarrhini</taxon>
        <taxon>Hominidae</taxon>
        <taxon>Homo</taxon>
    </lineage>
</organism>
<name>ZP1_HUMAN</name>
<dbReference type="EMBL" id="AC004126">
    <property type="status" value="NOT_ANNOTATED_CDS"/>
    <property type="molecule type" value="Genomic_DNA"/>
</dbReference>
<dbReference type="CCDS" id="CCDS31572.1"/>
<dbReference type="RefSeq" id="NP_997224.2">
    <property type="nucleotide sequence ID" value="NM_207341.4"/>
</dbReference>
<dbReference type="SMR" id="P60852"/>
<dbReference type="BioGRID" id="116579">
    <property type="interactions" value="3"/>
</dbReference>
<dbReference type="FunCoup" id="P60852">
    <property type="interactions" value="93"/>
</dbReference>
<dbReference type="IntAct" id="P60852">
    <property type="interactions" value="3"/>
</dbReference>
<dbReference type="STRING" id="9606.ENSP00000278853"/>
<dbReference type="MEROPS" id="S01.969"/>
<dbReference type="GlyCosmos" id="P60852">
    <property type="glycosylation" value="4 sites, No reported glycans"/>
</dbReference>
<dbReference type="GlyGen" id="P60852">
    <property type="glycosylation" value="7 sites"/>
</dbReference>
<dbReference type="iPTMnet" id="P60852"/>
<dbReference type="PhosphoSitePlus" id="P60852"/>
<dbReference type="BioMuta" id="ZP1"/>
<dbReference type="DMDM" id="46397079"/>
<dbReference type="MassIVE" id="P60852"/>
<dbReference type="PaxDb" id="9606-ENSP00000278853"/>
<dbReference type="PeptideAtlas" id="P60852"/>
<dbReference type="Antibodypedia" id="43518">
    <property type="antibodies" value="168 antibodies from 23 providers"/>
</dbReference>
<dbReference type="DNASU" id="22917"/>
<dbReference type="Ensembl" id="ENST00000278853.10">
    <property type="protein sequence ID" value="ENSP00000278853.5"/>
    <property type="gene ID" value="ENSG00000149506.12"/>
</dbReference>
<dbReference type="GeneID" id="22917"/>
<dbReference type="KEGG" id="hsa:22917"/>
<dbReference type="MANE-Select" id="ENST00000278853.10">
    <property type="protein sequence ID" value="ENSP00000278853.5"/>
    <property type="RefSeq nucleotide sequence ID" value="NM_207341.4"/>
    <property type="RefSeq protein sequence ID" value="NP_997224.2"/>
</dbReference>
<dbReference type="AGR" id="HGNC:13187"/>
<dbReference type="CTD" id="22917"/>
<dbReference type="DisGeNET" id="22917"/>
<dbReference type="GeneCards" id="ZP1"/>
<dbReference type="HGNC" id="HGNC:13187">
    <property type="gene designation" value="ZP1"/>
</dbReference>
<dbReference type="HPA" id="ENSG00000149506">
    <property type="expression patterns" value="Not detected"/>
</dbReference>
<dbReference type="MalaCards" id="ZP1"/>
<dbReference type="MIM" id="195000">
    <property type="type" value="gene"/>
</dbReference>
<dbReference type="MIM" id="615774">
    <property type="type" value="phenotype"/>
</dbReference>
<dbReference type="neXtProt" id="NX_P60852"/>
<dbReference type="OpenTargets" id="ENSG00000149506"/>
<dbReference type="Orphanet" id="404466">
    <property type="disease" value="Female infertility due to zona pellucida defect"/>
</dbReference>
<dbReference type="PharmGKB" id="PA37755"/>
<dbReference type="VEuPathDB" id="HostDB:ENSG00000149506"/>
<dbReference type="eggNOG" id="ENOG502RYNN">
    <property type="taxonomic scope" value="Eukaryota"/>
</dbReference>
<dbReference type="GeneTree" id="ENSGT00940000161188"/>
<dbReference type="HOGENOM" id="CLU_034433_0_0_1"/>
<dbReference type="InParanoid" id="P60852"/>
<dbReference type="OMA" id="RFEVNNC"/>
<dbReference type="OrthoDB" id="9907024at2759"/>
<dbReference type="PAN-GO" id="P60852">
    <property type="GO annotations" value="6 GO annotations based on evolutionary models"/>
</dbReference>
<dbReference type="PhylomeDB" id="P60852"/>
<dbReference type="TreeFam" id="TF332794"/>
<dbReference type="PathwayCommons" id="P60852"/>
<dbReference type="Reactome" id="R-HSA-2534343">
    <property type="pathway name" value="Interaction With Cumulus Cells And The Zona Pellucida"/>
</dbReference>
<dbReference type="SignaLink" id="P60852"/>
<dbReference type="SIGNOR" id="P60852"/>
<dbReference type="BioGRID-ORCS" id="22917">
    <property type="hits" value="16 hits in 1143 CRISPR screens"/>
</dbReference>
<dbReference type="ChiTaRS" id="ZP1">
    <property type="organism name" value="human"/>
</dbReference>
<dbReference type="GenomeRNAi" id="22917"/>
<dbReference type="Pharos" id="P60852">
    <property type="development level" value="Tbio"/>
</dbReference>
<dbReference type="PRO" id="PR:P60852"/>
<dbReference type="Proteomes" id="UP000005640">
    <property type="component" value="Chromosome 11"/>
</dbReference>
<dbReference type="RNAct" id="P60852">
    <property type="molecule type" value="protein"/>
</dbReference>
<dbReference type="Bgee" id="ENSG00000149506">
    <property type="expression patterns" value="Expressed in oocyte and 110 other cell types or tissues"/>
</dbReference>
<dbReference type="ExpressionAtlas" id="P60852">
    <property type="expression patterns" value="baseline and differential"/>
</dbReference>
<dbReference type="GO" id="GO:0062023">
    <property type="term" value="C:collagen-containing extracellular matrix"/>
    <property type="evidence" value="ECO:0000318"/>
    <property type="project" value="GO_Central"/>
</dbReference>
<dbReference type="GO" id="GO:0035805">
    <property type="term" value="C:egg coat"/>
    <property type="evidence" value="ECO:0000314"/>
    <property type="project" value="UniProtKB"/>
</dbReference>
<dbReference type="GO" id="GO:0005576">
    <property type="term" value="C:extracellular region"/>
    <property type="evidence" value="ECO:0000304"/>
    <property type="project" value="Reactome"/>
</dbReference>
<dbReference type="GO" id="GO:0005886">
    <property type="term" value="C:plasma membrane"/>
    <property type="evidence" value="ECO:0007669"/>
    <property type="project" value="UniProtKB-SubCell"/>
</dbReference>
<dbReference type="GO" id="GO:0032190">
    <property type="term" value="F:acrosin binding"/>
    <property type="evidence" value="ECO:0000318"/>
    <property type="project" value="GO_Central"/>
</dbReference>
<dbReference type="GO" id="GO:0035804">
    <property type="term" value="F:structural constituent of egg coat"/>
    <property type="evidence" value="ECO:0000250"/>
    <property type="project" value="UniProtKB"/>
</dbReference>
<dbReference type="GO" id="GO:0007339">
    <property type="term" value="P:binding of sperm to zona pellucida"/>
    <property type="evidence" value="ECO:0000318"/>
    <property type="project" value="GO_Central"/>
</dbReference>
<dbReference type="GO" id="GO:0060468">
    <property type="term" value="P:prevention of polyspermy"/>
    <property type="evidence" value="ECO:0000318"/>
    <property type="project" value="GO_Central"/>
</dbReference>
<dbReference type="CDD" id="cd00111">
    <property type="entry name" value="Trefoil"/>
    <property type="match status" value="1"/>
</dbReference>
<dbReference type="FunFam" id="2.60.40.3210:FF:000007">
    <property type="entry name" value="Zona pellucida glycoprotein 1"/>
    <property type="match status" value="1"/>
</dbReference>
<dbReference type="FunFam" id="2.60.40.4100:FF:000004">
    <property type="entry name" value="Zona pellucida sperm-binding protein 2"/>
    <property type="match status" value="1"/>
</dbReference>
<dbReference type="Gene3D" id="2.60.40.4100">
    <property type="entry name" value="Zona pellucida, ZP-C domain"/>
    <property type="match status" value="1"/>
</dbReference>
<dbReference type="Gene3D" id="2.60.40.3210">
    <property type="entry name" value="Zona pellucida, ZP-N domain"/>
    <property type="match status" value="1"/>
</dbReference>
<dbReference type="InterPro" id="IPR017957">
    <property type="entry name" value="P_trefoil_CS"/>
</dbReference>
<dbReference type="InterPro" id="IPR000519">
    <property type="entry name" value="P_trefoil_dom"/>
</dbReference>
<dbReference type="InterPro" id="IPR044913">
    <property type="entry name" value="P_trefoil_dom_sf"/>
</dbReference>
<dbReference type="InterPro" id="IPR051148">
    <property type="entry name" value="Zona_Pellucida_Domain_gp"/>
</dbReference>
<dbReference type="InterPro" id="IPR055355">
    <property type="entry name" value="ZP-C"/>
</dbReference>
<dbReference type="InterPro" id="IPR042235">
    <property type="entry name" value="ZP-C_dom"/>
</dbReference>
<dbReference type="InterPro" id="IPR055356">
    <property type="entry name" value="ZP-N"/>
</dbReference>
<dbReference type="InterPro" id="IPR054554">
    <property type="entry name" value="ZP1/4_Ig-like"/>
</dbReference>
<dbReference type="InterPro" id="IPR048290">
    <property type="entry name" value="ZP_chr"/>
</dbReference>
<dbReference type="InterPro" id="IPR001507">
    <property type="entry name" value="ZP_dom"/>
</dbReference>
<dbReference type="InterPro" id="IPR017977">
    <property type="entry name" value="ZP_dom_CS"/>
</dbReference>
<dbReference type="PANTHER" id="PTHR23343">
    <property type="entry name" value="ZONA PELLUCIDA SPERM-BINDING PROTEIN"/>
    <property type="match status" value="1"/>
</dbReference>
<dbReference type="PANTHER" id="PTHR23343:SF41">
    <property type="entry name" value="ZONA PELLUCIDA SPERM-BINDING PROTEIN 1"/>
    <property type="match status" value="1"/>
</dbReference>
<dbReference type="Pfam" id="PF00100">
    <property type="entry name" value="Zona_pellucida"/>
    <property type="match status" value="1"/>
</dbReference>
<dbReference type="Pfam" id="PF23344">
    <property type="entry name" value="ZP-N"/>
    <property type="match status" value="1"/>
</dbReference>
<dbReference type="Pfam" id="PF22821">
    <property type="entry name" value="ZP1_ZP4_Ig-like"/>
    <property type="match status" value="1"/>
</dbReference>
<dbReference type="PRINTS" id="PR00023">
    <property type="entry name" value="ZPELLUCIDA"/>
</dbReference>
<dbReference type="SMART" id="SM00018">
    <property type="entry name" value="PD"/>
    <property type="match status" value="1"/>
</dbReference>
<dbReference type="SMART" id="SM00241">
    <property type="entry name" value="ZP"/>
    <property type="match status" value="1"/>
</dbReference>
<dbReference type="SUPFAM" id="SSF57492">
    <property type="entry name" value="Trefoil"/>
    <property type="match status" value="1"/>
</dbReference>
<dbReference type="PROSITE" id="PS00025">
    <property type="entry name" value="P_TREFOIL_1"/>
    <property type="match status" value="1"/>
</dbReference>
<dbReference type="PROSITE" id="PS51448">
    <property type="entry name" value="P_TREFOIL_2"/>
    <property type="match status" value="1"/>
</dbReference>
<dbReference type="PROSITE" id="PS00682">
    <property type="entry name" value="ZP_1"/>
    <property type="match status" value="1"/>
</dbReference>
<dbReference type="PROSITE" id="PS51034">
    <property type="entry name" value="ZP_2"/>
    <property type="match status" value="1"/>
</dbReference>
<keyword id="KW-1003">Cell membrane</keyword>
<keyword id="KW-0165">Cleavage on pair of basic residues</keyword>
<keyword id="KW-1015">Disulfide bond</keyword>
<keyword id="KW-0272">Extracellular matrix</keyword>
<keyword id="KW-0278">Fertilization</keyword>
<keyword id="KW-0325">Glycoprotein</keyword>
<keyword id="KW-0472">Membrane</keyword>
<keyword id="KW-1267">Proteomics identification</keyword>
<keyword id="KW-1185">Reference proteome</keyword>
<keyword id="KW-0964">Secreted</keyword>
<keyword id="KW-0732">Signal</keyword>
<keyword id="KW-0812">Transmembrane</keyword>
<keyword id="KW-1133">Transmembrane helix</keyword>
<gene>
    <name type="primary">ZP1</name>
</gene>
<feature type="signal peptide" evidence="4">
    <location>
        <begin position="1"/>
        <end position="25"/>
    </location>
</feature>
<feature type="chain" id="PRO_0000041677" description="Zona pellucida sperm-binding protein 1">
    <location>
        <begin position="26"/>
        <end position="553"/>
    </location>
</feature>
<feature type="chain" id="PRO_0000304553" description="Processed zona pellucida sperm-binding protein 1">
    <location>
        <begin position="26"/>
        <end status="unknown"/>
    </location>
</feature>
<feature type="propeptide" id="PRO_0000041678" description="Removed in mature form" evidence="1">
    <location>
        <begin position="554"/>
        <end position="638"/>
    </location>
</feature>
<feature type="topological domain" description="Extracellular" evidence="4">
    <location>
        <begin position="26"/>
        <end position="601"/>
    </location>
</feature>
<feature type="transmembrane region" description="Helical" evidence="4">
    <location>
        <begin position="602"/>
        <end position="622"/>
    </location>
</feature>
<feature type="topological domain" description="Cytoplasmic" evidence="4">
    <location>
        <begin position="623"/>
        <end position="638"/>
    </location>
</feature>
<feature type="domain" description="P-type" evidence="6">
    <location>
        <begin position="234"/>
        <end position="274"/>
    </location>
</feature>
<feature type="domain" description="ZP" evidence="5">
    <location>
        <begin position="279"/>
        <end position="553"/>
    </location>
</feature>
<feature type="region of interest" description="Disordered" evidence="7">
    <location>
        <begin position="165"/>
        <end position="208"/>
    </location>
</feature>
<feature type="region of interest" description="Disordered" evidence="7">
    <location>
        <begin position="549"/>
        <end position="594"/>
    </location>
</feature>
<feature type="compositionally biased region" description="Polar residues" evidence="7">
    <location>
        <begin position="165"/>
        <end position="175"/>
    </location>
</feature>
<feature type="glycosylation site" description="N-linked (GlcNAc...) asparagine" evidence="1">
    <location>
        <position position="76"/>
    </location>
</feature>
<feature type="glycosylation site" description="N-linked (GlcNAc...) asparagine" evidence="1">
    <location>
        <position position="379"/>
    </location>
</feature>
<feature type="glycosylation site" description="N-linked (GlcNAc...) asparagine" evidence="4">
    <location>
        <position position="561"/>
    </location>
</feature>
<feature type="glycosylation site" description="N-linked (GlcNAc...) asparagine" evidence="4">
    <location>
        <position position="596"/>
    </location>
</feature>
<feature type="disulfide bond" evidence="6">
    <location>
        <begin position="236"/>
        <end position="261"/>
    </location>
</feature>
<feature type="disulfide bond" evidence="6">
    <location>
        <begin position="245"/>
        <end position="260"/>
    </location>
</feature>
<feature type="disulfide bond" evidence="6">
    <location>
        <begin position="255"/>
        <end position="270"/>
    </location>
</feature>
<feature type="disulfide bond" evidence="6">
    <location>
        <begin position="457"/>
        <end position="478"/>
    </location>
</feature>
<feature type="sequence variant" id="VAR_052996" description="In dbSNP:rs489172.">
    <original>T</original>
    <variation>I</variation>
    <location>
        <position position="158"/>
    </location>
</feature>
<proteinExistence type="evidence at protein level"/>
<accession>P60852</accession>
<evidence type="ECO:0000250" key="1"/>
<evidence type="ECO:0000250" key="2">
    <source>
        <dbReference type="UniProtKB" id="P20239"/>
    </source>
</evidence>
<evidence type="ECO:0000250" key="3">
    <source>
        <dbReference type="UniProtKB" id="P48829"/>
    </source>
</evidence>
<evidence type="ECO:0000255" key="4"/>
<evidence type="ECO:0000255" key="5">
    <source>
        <dbReference type="PROSITE-ProRule" id="PRU00375"/>
    </source>
</evidence>
<evidence type="ECO:0000255" key="6">
    <source>
        <dbReference type="PROSITE-ProRule" id="PRU00779"/>
    </source>
</evidence>
<evidence type="ECO:0000256" key="7">
    <source>
        <dbReference type="SAM" id="MobiDB-lite"/>
    </source>
</evidence>
<evidence type="ECO:0000269" key="8">
    <source>
    </source>
</evidence>
<evidence type="ECO:0000269" key="9">
    <source>
    </source>
</evidence>
<evidence type="ECO:0000269" key="10">
    <source>
    </source>
</evidence>
<evidence type="ECO:0000305" key="11"/>
<comment type="function">
    <text>Component of the zona pellucida, an extracellular matrix surrounding oocytes which mediates sperm binding, induction of the acrosome reaction and prevents post-fertilization polyspermy. The zona pellucida is composed of 3 to 4 glycoproteins, ZP1, ZP2, ZP3, and ZP4. ZP1 ensures the structural integrity of the zona pellucida.</text>
</comment>
<comment type="subunit">
    <text evidence="2 9">Polymers of ZP2 and ZP3 organized into long filaments cross-linked by ZP1 homodimers (By similarity). Interacts with ZP3 (PubMed:28886344).</text>
</comment>
<comment type="subcellular location">
    <molecule>Processed zona pellucida sperm-binding protein 1</molecule>
    <subcellularLocation>
        <location evidence="10">Zona pellucida</location>
    </subcellularLocation>
</comment>
<comment type="subcellular location">
    <subcellularLocation>
        <location evidence="3">Cell membrane</location>
        <topology evidence="4">Single-pass type I membrane protein</topology>
    </subcellularLocation>
</comment>
<comment type="tissue specificity">
    <text evidence="10">Expressed in oocytes (at protein level).</text>
</comment>
<comment type="domain">
    <text>The ZP domain is involved in the polymerization of the ZP proteins to form the zona pellucida.</text>
</comment>
<comment type="PTM">
    <text>Proteolytically cleaved before the transmembrane segment to yield the secreted ectodomain incorporated in the zona pellucida.</text>
</comment>
<comment type="PTM">
    <text evidence="1">O-glycosylated.</text>
</comment>
<comment type="disease" evidence="8">
    <disease id="DI-04091">
        <name>Oocyte/zygote/embryo maturation arrest 1</name>
        <acronym>OZEMA1</acronym>
        <description>An autosomal recessive infertility disorder caused by defective oocyte maturation that results in abnormal eggs lacking a zona pellucida. Affected females have normal menstrual cycles and sex hormone levels, no obstruction in the fallopian tubes or abnormalities of the uterus or adnexa.</description>
        <dbReference type="MIM" id="615774"/>
    </disease>
    <text>The disease is caused by variants affecting the gene represented in this entry.</text>
</comment>
<comment type="similarity">
    <text evidence="11">Belongs to the ZP domain family. ZPB subfamily.</text>
</comment>
<reference key="1">
    <citation type="journal article" date="1999" name="Biochim. Biophys. Acta">
        <title>Identification of the true human orthologue of the mouse Zp1 gene: evidence for greater complexity in the mammalian zona pellucida?</title>
        <authorList>
            <person name="Hughes D.C."/>
            <person name="Barratt C.L."/>
        </authorList>
    </citation>
    <scope>NUCLEOTIDE SEQUENCE [GENOMIC DNA]</scope>
</reference>
<reference key="2">
    <citation type="journal article" date="2006" name="Nature">
        <title>Human chromosome 11 DNA sequence and analysis including novel gene identification.</title>
        <authorList>
            <person name="Taylor T.D."/>
            <person name="Noguchi H."/>
            <person name="Totoki Y."/>
            <person name="Toyoda A."/>
            <person name="Kuroki Y."/>
            <person name="Dewar K."/>
            <person name="Lloyd C."/>
            <person name="Itoh T."/>
            <person name="Takeda T."/>
            <person name="Kim D.-W."/>
            <person name="She X."/>
            <person name="Barlow K.F."/>
            <person name="Bloom T."/>
            <person name="Bruford E."/>
            <person name="Chang J.L."/>
            <person name="Cuomo C.A."/>
            <person name="Eichler E."/>
            <person name="FitzGerald M.G."/>
            <person name="Jaffe D.B."/>
            <person name="LaButti K."/>
            <person name="Nicol R."/>
            <person name="Park H.-S."/>
            <person name="Seaman C."/>
            <person name="Sougnez C."/>
            <person name="Yang X."/>
            <person name="Zimmer A.R."/>
            <person name="Zody M.C."/>
            <person name="Birren B.W."/>
            <person name="Nusbaum C."/>
            <person name="Fujiyama A."/>
            <person name="Hattori M."/>
            <person name="Rogers J."/>
            <person name="Lander E.S."/>
            <person name="Sakaki Y."/>
        </authorList>
    </citation>
    <scope>NUCLEOTIDE SEQUENCE [LARGE SCALE GENOMIC DNA]</scope>
</reference>
<reference key="3">
    <citation type="journal article" date="2014" name="N. Engl. J. Med.">
        <title>Mutant ZP1 in familial infertility.</title>
        <authorList>
            <person name="Huang H.L."/>
            <person name="Lv C."/>
            <person name="Zhao Y.C."/>
            <person name="Li W."/>
            <person name="He X.M."/>
            <person name="Li P."/>
            <person name="Sha A.G."/>
            <person name="Tian X."/>
            <person name="Papasian C.J."/>
            <person name="Deng H.W."/>
            <person name="Lu G.X."/>
            <person name="Xiao H.M."/>
        </authorList>
    </citation>
    <scope>INVOLVEMENT IN OZEMA1</scope>
</reference>
<reference key="4">
    <citation type="journal article" date="2017" name="Am. J. Hum. Genet.">
        <title>A recurrent missense mutation in ZP3 causes empty follicle syndrome and female infertility.</title>
        <authorList>
            <person name="Chen T."/>
            <person name="Bian Y."/>
            <person name="Liu X."/>
            <person name="Zhao S."/>
            <person name="Wu K."/>
            <person name="Yan L."/>
            <person name="Li M."/>
            <person name="Yang Z."/>
            <person name="Liu H."/>
            <person name="Zhao H."/>
            <person name="Chen Z.J."/>
        </authorList>
    </citation>
    <scope>INTERACTION WITH ZP3</scope>
</reference>
<reference key="5">
    <citation type="journal article" date="2019" name="Genet. Med.">
        <title>ZP2 pathogenic variants cause in vitro fertilization failure and female infertility.</title>
        <authorList>
            <person name="Dai C."/>
            <person name="Hu L."/>
            <person name="Gong F."/>
            <person name="Tan Y."/>
            <person name="Cai S."/>
            <person name="Zhang S."/>
            <person name="Dai J."/>
            <person name="Lu C."/>
            <person name="Chen J."/>
            <person name="Chen Y."/>
            <person name="Lu G."/>
            <person name="Du J."/>
            <person name="Lin G."/>
        </authorList>
    </citation>
    <scope>SUBCELLULAR LOCATION</scope>
    <scope>TISSUE SPECIFICITY</scope>
</reference>
<protein>
    <recommendedName>
        <fullName>Zona pellucida sperm-binding protein 1</fullName>
    </recommendedName>
    <alternativeName>
        <fullName>Zona pellucida glycoprotein 1</fullName>
        <shortName>Zp-1</shortName>
    </alternativeName>
    <component>
        <recommendedName>
            <fullName>Processed zona pellucida sperm-binding protein 1</fullName>
        </recommendedName>
    </component>
</protein>
<sequence>MAGGSATTWGYPVALLLLVATLGLGRWLQPDPGLPGLRHSYDCGIKGMQLLVFPRPGQTLRFKVVDEFGNRFDVNNCSICYHWVTSRPQEPAVFSADYRGCHVLEKDGRFHLRVFMEAVLPNGRVDVAQDATLICPKPDPSRTLDSQLAPPAMFSVSTPQTLSFLPTSGHTSQGSGHAFPSPLDPGHSSVHPTPALPSPGPGPTLATLAQPHWGTLEHWDVNKRDYIGTHLSQEQCQVASGHLPCIVRRTSKEACQQAGCCYDNTREVPCYYGNTATVQCFRDGYFVLVVSQEMALTHRITLANIHLAYAPTSCSPTQHTEAFVVFYFPLTHCGTTMQVAGDQLIYENWLVSGIHIQKGPQGSITRDSTFQLHVRCVFNASDFLPIQASIFPPPSPAPMTQPGPLRLELRIAKDETFSSYYGEDDYPIVRLLREPVHVEVRLLQRTDPNLVLLLHQCWGAPSANPFQQPQWPILSDGCPFKGDSYRTQMVALDGATPFQSHYQRFTVATFALLDSGSQRALRGLVYLFCSTSACHTSGLETCSTACSTGTTRQRRSSGHRNDTARPQDIVSSPGPVGFEDSYGQEPTLGPTDSNGNSSLRPLLWAVLLLPAVALVLGFGVFVGLSQTWAQKLWESNRQ</sequence>